<comment type="function">
    <text evidence="3">Bacteriocin.</text>
</comment>
<comment type="subcellular location">
    <subcellularLocation>
        <location evidence="1">Secreted</location>
    </subcellularLocation>
</comment>
<comment type="mass spectrometry" mass="4332.0" error="1.0" method="MALDI" evidence="3"/>
<comment type="similarity">
    <text evidence="2">Belongs to the bacteriocin class IIA/YGNGV family.</text>
</comment>
<gene>
    <name type="primary">entHF</name>
</gene>
<name>ETCHF_ENTFC</name>
<accession>P86183</accession>
<accession>X5D0R7</accession>
<dbReference type="EMBL" id="KJ442693">
    <property type="protein sequence ID" value="AHW46186.1"/>
    <property type="molecule type" value="Genomic_DNA"/>
</dbReference>
<dbReference type="RefSeq" id="WP_048340600.1">
    <property type="nucleotide sequence ID" value="NZ_LAXK01000018.1"/>
</dbReference>
<dbReference type="PDB" id="2N4K">
    <property type="method" value="NMR"/>
    <property type="chains" value="A=16-58"/>
</dbReference>
<dbReference type="PDBsum" id="2N4K"/>
<dbReference type="SMR" id="P86183"/>
<dbReference type="EvolutionaryTrace" id="P86183"/>
<dbReference type="GO" id="GO:0005576">
    <property type="term" value="C:extracellular region"/>
    <property type="evidence" value="ECO:0007669"/>
    <property type="project" value="UniProtKB-SubCell"/>
</dbReference>
<dbReference type="GO" id="GO:0042742">
    <property type="term" value="P:defense response to bacterium"/>
    <property type="evidence" value="ECO:0007669"/>
    <property type="project" value="UniProtKB-KW"/>
</dbReference>
<dbReference type="GO" id="GO:0031640">
    <property type="term" value="P:killing of cells of another organism"/>
    <property type="evidence" value="ECO:0007669"/>
    <property type="project" value="UniProtKB-KW"/>
</dbReference>
<dbReference type="Gene3D" id="1.20.5.130">
    <property type="match status" value="1"/>
</dbReference>
<dbReference type="InterPro" id="IPR002633">
    <property type="entry name" value="Bacteriocin_IIa"/>
</dbReference>
<dbReference type="InterPro" id="IPR023384">
    <property type="entry name" value="Bacteriocin_IIa_CS"/>
</dbReference>
<dbReference type="InterPro" id="IPR023388">
    <property type="entry name" value="Bacteriocin_IIa_dom_sf"/>
</dbReference>
<dbReference type="Pfam" id="PF01721">
    <property type="entry name" value="Bacteriocin_II"/>
    <property type="match status" value="1"/>
</dbReference>
<dbReference type="PROSITE" id="PS60030">
    <property type="entry name" value="BACTERIOCIN_IIA"/>
    <property type="match status" value="1"/>
</dbReference>
<proteinExistence type="evidence at protein level"/>
<feature type="propeptide" id="PRO_0000429796" evidence="3">
    <location>
        <begin position="1"/>
        <end position="15"/>
    </location>
</feature>
<feature type="chain" id="PRO_0000371459" description="Enterocin-HF">
    <location>
        <begin position="16"/>
        <end position="58"/>
    </location>
</feature>
<feature type="disulfide bond" evidence="1">
    <location>
        <begin position="24"/>
        <end position="29"/>
    </location>
</feature>
<feature type="sequence conflict" description="In Ref. 2; AA sequence." evidence="4" ref="2">
    <original>GWKG</original>
    <variation>AWAC</variation>
    <location>
        <begin position="55"/>
        <end position="58"/>
    </location>
</feature>
<feature type="strand" evidence="5">
    <location>
        <begin position="19"/>
        <end position="21"/>
    </location>
</feature>
<feature type="strand" evidence="5">
    <location>
        <begin position="24"/>
        <end position="27"/>
    </location>
</feature>
<feature type="helix" evidence="5">
    <location>
        <begin position="36"/>
        <end position="49"/>
    </location>
</feature>
<sequence length="58" mass="5949">MEKLTVKEMSQVVGGKYYGNGVSCNKKGCSVDWGKAIGIIGNNAAANLTTGGKAGWKG</sequence>
<organism>
    <name type="scientific">Enterococcus faecium</name>
    <name type="common">Streptococcus faecium</name>
    <dbReference type="NCBI Taxonomy" id="1352"/>
    <lineage>
        <taxon>Bacteria</taxon>
        <taxon>Bacillati</taxon>
        <taxon>Bacillota</taxon>
        <taxon>Bacilli</taxon>
        <taxon>Lactobacillales</taxon>
        <taxon>Enterococcaceae</taxon>
        <taxon>Enterococcus</taxon>
    </lineage>
</organism>
<reference evidence="4" key="1">
    <citation type="submission" date="2014-02" db="EMBL/GenBank/DDBJ databases">
        <title>Enterocin HF, a new pediocin-like bacteriocin produced by Enterococcus faecium strains of human and fish origin.</title>
        <authorList>
            <person name="Campanero C."/>
            <person name="Brandao A."/>
            <person name="Almeida T."/>
            <person name="Igrejas G."/>
            <person name="Poeta P."/>
            <person name="Hernandez P.E."/>
            <person name="Herranz C."/>
            <person name="Cintas L.M."/>
        </authorList>
    </citation>
    <scope>NUCLEOTIDE SEQUENCE [GENOMIC DNA]</scope>
    <source>
        <strain>HS38</strain>
    </source>
</reference>
<reference evidence="4" key="2">
    <citation type="submission" date="2009-01" db="UniProtKB">
        <title>Amino acid sequence of Enterocin-HF, a new pediocin-like bacteriocin produced by E. faecium HS and E. faecium TA29 isolated from humans and fish (thin-lipped grey mullet; Liza ramada) in Portugal.</title>
        <authorList>
            <person name="Almeida T."/>
            <person name="Brandao A."/>
            <person name="Campanero C."/>
            <person name="Igrejas G."/>
            <person name="Torres C."/>
            <person name="Herandez P.E."/>
            <person name="Poeta P."/>
            <person name="Cintas L.M."/>
            <person name="Herranz C."/>
        </authorList>
    </citation>
    <scope>PROTEIN SEQUENCE OF 16-58</scope>
    <scope>FUNCTION</scope>
    <scope>MASS SPECTROMETRY</scope>
    <source>
        <strain>HS</strain>
        <strain>TA29</strain>
    </source>
</reference>
<evidence type="ECO:0000250" key="1"/>
<evidence type="ECO:0000255" key="2"/>
<evidence type="ECO:0000269" key="3">
    <source ref="2"/>
</evidence>
<evidence type="ECO:0000305" key="4"/>
<evidence type="ECO:0007829" key="5">
    <source>
        <dbReference type="PDB" id="2N4K"/>
    </source>
</evidence>
<protein>
    <recommendedName>
        <fullName>Enterocin-HF</fullName>
    </recommendedName>
</protein>
<keyword id="KW-0002">3D-structure</keyword>
<keyword id="KW-0044">Antibiotic</keyword>
<keyword id="KW-0929">Antimicrobial</keyword>
<keyword id="KW-0078">Bacteriocin</keyword>
<keyword id="KW-0903">Direct protein sequencing</keyword>
<keyword id="KW-1015">Disulfide bond</keyword>
<keyword id="KW-0964">Secreted</keyword>